<gene>
    <name type="primary">rtpR</name>
    <name type="ordered locus">lhv_0042</name>
</gene>
<proteinExistence type="inferred from homology"/>
<dbReference type="EC" id="1.17.4.2"/>
<dbReference type="EMBL" id="CP000517">
    <property type="protein sequence ID" value="ABX26329.1"/>
    <property type="molecule type" value="Genomic_DNA"/>
</dbReference>
<dbReference type="SMR" id="A8YW74"/>
<dbReference type="KEGG" id="lhe:lhv_0042"/>
<dbReference type="eggNOG" id="COG0209">
    <property type="taxonomic scope" value="Bacteria"/>
</dbReference>
<dbReference type="HOGENOM" id="CLU_002384_0_0_9"/>
<dbReference type="Proteomes" id="UP000000790">
    <property type="component" value="Chromosome"/>
</dbReference>
<dbReference type="GO" id="GO:0031419">
    <property type="term" value="F:cobalamin binding"/>
    <property type="evidence" value="ECO:0007669"/>
    <property type="project" value="UniProtKB-KW"/>
</dbReference>
<dbReference type="GO" id="GO:0000166">
    <property type="term" value="F:nucleotide binding"/>
    <property type="evidence" value="ECO:0007669"/>
    <property type="project" value="InterPro"/>
</dbReference>
<dbReference type="GO" id="GO:0004748">
    <property type="term" value="F:ribonucleoside-diphosphate reductase activity, thioredoxin disulfide as acceptor"/>
    <property type="evidence" value="ECO:0007669"/>
    <property type="project" value="InterPro"/>
</dbReference>
<dbReference type="GO" id="GO:0008998">
    <property type="term" value="F:ribonucleoside-triphosphate reductase (thioredoxin) activity"/>
    <property type="evidence" value="ECO:0007669"/>
    <property type="project" value="UniProtKB-EC"/>
</dbReference>
<dbReference type="GO" id="GO:0006260">
    <property type="term" value="P:DNA replication"/>
    <property type="evidence" value="ECO:0007669"/>
    <property type="project" value="UniProtKB-KW"/>
</dbReference>
<dbReference type="Gene3D" id="3.20.70.20">
    <property type="match status" value="1"/>
</dbReference>
<dbReference type="Gene3D" id="3.30.1620.10">
    <property type="entry name" value="b-12 dependent (class ii) ribonucleotide reductase, Chain A, Domain 2"/>
    <property type="match status" value="1"/>
</dbReference>
<dbReference type="Gene3D" id="3.90.1390.10">
    <property type="entry name" value="b-12 dependent (class ii) ribonucleotide reductase, chain A, domain 3"/>
    <property type="match status" value="1"/>
</dbReference>
<dbReference type="InterPro" id="IPR050862">
    <property type="entry name" value="RdRp_reductase_class-2"/>
</dbReference>
<dbReference type="InterPro" id="IPR054158">
    <property type="entry name" value="RNR-II_ins_dom"/>
</dbReference>
<dbReference type="InterPro" id="IPR040763">
    <property type="entry name" value="RNR_alpha_hel"/>
</dbReference>
<dbReference type="InterPro" id="IPR013345">
    <property type="entry name" value="RTP_Rdtase_AdoCbl-dep"/>
</dbReference>
<dbReference type="NCBIfam" id="TIGR02505">
    <property type="entry name" value="RTPR"/>
    <property type="match status" value="1"/>
</dbReference>
<dbReference type="PANTHER" id="PTHR43371:SF1">
    <property type="entry name" value="RIBONUCLEOSIDE-DIPHOSPHATE REDUCTASE"/>
    <property type="match status" value="1"/>
</dbReference>
<dbReference type="PANTHER" id="PTHR43371">
    <property type="entry name" value="VITAMIN B12-DEPENDENT RIBONUCLEOTIDE REDUCTASE"/>
    <property type="match status" value="1"/>
</dbReference>
<dbReference type="Pfam" id="PF21995">
    <property type="entry name" value="RNR-II_ins_dom"/>
    <property type="match status" value="1"/>
</dbReference>
<dbReference type="Pfam" id="PF17975">
    <property type="entry name" value="RNR_Alpha"/>
    <property type="match status" value="1"/>
</dbReference>
<dbReference type="SUPFAM" id="SSF51998">
    <property type="entry name" value="PFL-like glycyl radical enzymes"/>
    <property type="match status" value="1"/>
</dbReference>
<accession>A8YW74</accession>
<feature type="chain" id="PRO_0000326542" description="Adenosylcobalamin-dependent ribonucleoside-triphosphate reductase">
    <location>
        <begin position="1"/>
        <end position="744"/>
    </location>
</feature>
<feature type="region of interest" description="Effector region-1" evidence="1">
    <location>
        <begin position="148"/>
        <end position="159"/>
    </location>
</feature>
<feature type="region of interest" description="Effector region-2" evidence="1">
    <location>
        <begin position="169"/>
        <end position="318"/>
    </location>
</feature>
<feature type="region of interest" description="Adenosylcobalamin-binding-1" evidence="1">
    <location>
        <begin position="570"/>
        <end position="631"/>
    </location>
</feature>
<feature type="region of interest" description="Adenosylcobalamin-binding-2" evidence="1">
    <location>
        <begin position="690"/>
        <end position="729"/>
    </location>
</feature>
<feature type="active site" evidence="1">
    <location>
        <position position="413"/>
    </location>
</feature>
<feature type="active site" evidence="1">
    <location>
        <position position="415"/>
    </location>
</feature>
<feature type="disulfide bond" description="Redox-active" evidence="1">
    <location>
        <begin position="120"/>
        <end position="424"/>
    </location>
</feature>
<sequence>MPATRITLDSTFIDQVKHEIKPHWGELGWVTYKRTYARWLPEKNRTENWDETVKRVIEGNINLDPRLQDLPSQDVIDKLTNEAQQLFRLVYSLSATPSGRNLWISGTDYQKRNGDSLNNCWFIAIRPQAYGDSHIVPTYIDKRKEAVSMPFSFLFDQLMKGGGVGFSVVDDNINQIPQVDHQVDLSVVIDKNSKSYDASLKVGAIDKAEWEKNNSGLDNVIYYRIPDTREGWVLANARLIDLHFNDTNPDQKTKLVLDISDIRPYGAKIHGFGGTASGPMPLVEMFFDINNVINERVGQKLTAVDATDICNLIGKTVVAGNVRRSAELALGSSDNQDFIKMKQDKEKLYHHRWASNNSVAINSKFNNYGPIADGIMHNGEPGIVNLDLSRNYGRIADGYQAGIDDDVEGTNPCGEISLANGEPCNLFEVFPYIAEQQGWDLKEAFSLAARYTKRVTFSHYDWEVSRNIIQKNRRIGVSMSGIQDWLLNDLGHRVVTGFKDATDKETGAPIKKPIYDPQGIKMVDGLYHAVIAADKAYSEELGVNPSIKHTTVKPSGTVAKLAGVSEGMHFHYAGYLIQRIRFQASDPLLPALRKCGYHTEPDIYTKNTICVEIPLRAAHADSKNFASAGTVSIAEQFATQAFLQTYWSDNAVSCTVTFQANESNQIAPLLHQYRHTIKSTSLLPYYGGSLKQAPKEPINKKAYEDRVAMITGDVKEVFENQNKDQKGLELVDQSDCTSGACPIK</sequence>
<protein>
    <recommendedName>
        <fullName>Adenosylcobalamin-dependent ribonucleoside-triphosphate reductase</fullName>
        <shortName>RTPR</shortName>
        <ecNumber>1.17.4.2</ecNumber>
    </recommendedName>
</protein>
<reference key="1">
    <citation type="journal article" date="2008" name="J. Bacteriol.">
        <title>Genome sequence of Lactobacillus helveticus: an organism distinguished by selective gene loss and IS element expansion.</title>
        <authorList>
            <person name="Callanan M."/>
            <person name="Kaleta P."/>
            <person name="O'Callaghan J."/>
            <person name="O'Sullivan O."/>
            <person name="Jordan K."/>
            <person name="McAuliffe O."/>
            <person name="Sangrador-Vegas A."/>
            <person name="Slattery L."/>
            <person name="Fitzgerald G.F."/>
            <person name="Beresford T."/>
            <person name="Ross R.P."/>
        </authorList>
    </citation>
    <scope>NUCLEOTIDE SEQUENCE [LARGE SCALE GENOMIC DNA]</scope>
    <source>
        <strain>DPC 4571</strain>
    </source>
</reference>
<organism>
    <name type="scientific">Lactobacillus helveticus (strain DPC 4571)</name>
    <dbReference type="NCBI Taxonomy" id="405566"/>
    <lineage>
        <taxon>Bacteria</taxon>
        <taxon>Bacillati</taxon>
        <taxon>Bacillota</taxon>
        <taxon>Bacilli</taxon>
        <taxon>Lactobacillales</taxon>
        <taxon>Lactobacillaceae</taxon>
        <taxon>Lactobacillus</taxon>
    </lineage>
</organism>
<keyword id="KW-0021">Allosteric enzyme</keyword>
<keyword id="KW-0846">Cobalamin</keyword>
<keyword id="KW-0170">Cobalt</keyword>
<keyword id="KW-1015">Disulfide bond</keyword>
<keyword id="KW-0235">DNA replication</keyword>
<keyword id="KW-0560">Oxidoreductase</keyword>
<keyword id="KW-0676">Redox-active center</keyword>
<name>RTPR_LACH4</name>
<comment type="catalytic activity">
    <reaction>
        <text>a 2'-deoxyribonucleoside 5'-triphosphate + [thioredoxin]-disulfide + H2O = a ribonucleoside 5'-triphosphate + [thioredoxin]-dithiol</text>
        <dbReference type="Rhea" id="RHEA:12701"/>
        <dbReference type="Rhea" id="RHEA-COMP:10698"/>
        <dbReference type="Rhea" id="RHEA-COMP:10700"/>
        <dbReference type="ChEBI" id="CHEBI:15377"/>
        <dbReference type="ChEBI" id="CHEBI:29950"/>
        <dbReference type="ChEBI" id="CHEBI:50058"/>
        <dbReference type="ChEBI" id="CHEBI:61557"/>
        <dbReference type="ChEBI" id="CHEBI:61560"/>
        <dbReference type="EC" id="1.17.4.2"/>
    </reaction>
</comment>
<comment type="cofactor">
    <cofactor evidence="1">
        <name>adenosylcob(III)alamin</name>
        <dbReference type="ChEBI" id="CHEBI:18408"/>
    </cofactor>
</comment>
<comment type="activity regulation">
    <text evidence="1">Allosterically regulated by ATP and dNTP.</text>
</comment>
<comment type="subunit">
    <text evidence="1">Monomer.</text>
</comment>
<comment type="similarity">
    <text evidence="2">Belongs to the class II ribonucleoside-triphosphate reductase family.</text>
</comment>
<evidence type="ECO:0000250" key="1"/>
<evidence type="ECO:0000305" key="2"/>